<gene>
    <name evidence="7" type="ORF">EAG_05630</name>
</gene>
<feature type="signal peptide" evidence="2">
    <location>
        <begin position="1"/>
        <end position="18"/>
    </location>
</feature>
<feature type="propeptide" id="PRO_0000434206" evidence="6">
    <location>
        <begin position="19"/>
        <end position="96"/>
    </location>
</feature>
<feature type="peptide" id="PRO_0000434207" description="Diuretic hormone 44" evidence="3">
    <location>
        <begin position="97"/>
        <end position="108"/>
    </location>
</feature>
<feature type="propeptide" id="PRO_0000434208" evidence="6">
    <location>
        <begin position="109"/>
        <end position="169"/>
    </location>
</feature>
<feature type="coiled-coil region" evidence="2">
    <location>
        <begin position="83"/>
        <end position="108"/>
    </location>
</feature>
<feature type="modified residue" description="Pyrrolidone carboxylic acid" evidence="3">
    <location>
        <position position="97"/>
    </location>
</feature>
<feature type="modified residue" description="Isoleucine amide" evidence="3">
    <location>
        <position position="108"/>
    </location>
</feature>
<reference evidence="7" key="1">
    <citation type="journal article" date="2010" name="Science">
        <title>Genomic comparison of the ants Camponotus floridanus and Harpegnathos saltator.</title>
        <authorList>
            <person name="Bonasio R."/>
            <person name="Zhang G."/>
            <person name="Ye C."/>
            <person name="Mutti N.S."/>
            <person name="Fang X."/>
            <person name="Qin N."/>
            <person name="Donahue G."/>
            <person name="Yang P."/>
            <person name="Li Q."/>
            <person name="Li C."/>
            <person name="Zhang P."/>
            <person name="Huang Z."/>
            <person name="Berger S.L."/>
            <person name="Reinberg D."/>
            <person name="Wang J."/>
            <person name="Liebig J."/>
        </authorList>
    </citation>
    <scope>NUCLEOTIDE SEQUENCE [LARGE SCALE GENOMIC DNA]</scope>
</reference>
<reference evidence="5" key="2">
    <citation type="journal article" date="2015" name="J. Proteome Res.">
        <title>Neuropeptidomics of the carpenter ant Camponotus floridanus.</title>
        <authorList>
            <person name="Schmitt F."/>
            <person name="Vanselow J.T."/>
            <person name="Schlosser A."/>
            <person name="Kahnt J."/>
            <person name="Roessler W."/>
            <person name="Wegener C."/>
        </authorList>
    </citation>
    <scope>PROTEIN SEQUENCE OF 97-108</scope>
    <scope>TISSUE SPECIFICITY</scope>
    <scope>MASS SPECTROMETRY</scope>
    <scope>IDENTIFICATION BY MASS SPECTROMETRY</scope>
    <scope>AMIDATION AT ILE-108</scope>
    <scope>PYROGLUTAMATE FORMATION AT GLN-97</scope>
</reference>
<comment type="function">
    <text evidence="1">Regulation of fluid secretion.</text>
</comment>
<comment type="subcellular location">
    <subcellularLocation>
        <location evidence="6">Secreted</location>
    </subcellularLocation>
</comment>
<comment type="tissue specificity">
    <text evidence="3">Expressed in brain, ventral ganglia and the retrocerebral complex (at protein level).</text>
</comment>
<comment type="PTM">
    <text evidence="4">Residues Ile-66 to Gly-109 may constitute another form of the DH44 peptide, which has not been detected yet.</text>
</comment>
<comment type="mass spectrometry"/>
<comment type="similarity">
    <text evidence="5">Belongs to the sauvagine/corticotropin-releasing factor/urotensin I family.</text>
</comment>
<protein>
    <recommendedName>
        <fullName evidence="4">Diuretic hormone 44</fullName>
        <shortName evidence="4">DH(44)</shortName>
    </recommendedName>
</protein>
<evidence type="ECO:0000250" key="1">
    <source>
        <dbReference type="UniProtKB" id="P82707"/>
    </source>
</evidence>
<evidence type="ECO:0000255" key="2"/>
<evidence type="ECO:0000269" key="3">
    <source>
    </source>
</evidence>
<evidence type="ECO:0000303" key="4">
    <source>
    </source>
</evidence>
<evidence type="ECO:0000305" key="5"/>
<evidence type="ECO:0000305" key="6">
    <source>
    </source>
</evidence>
<evidence type="ECO:0000312" key="7">
    <source>
        <dbReference type="EMBL" id="EFN70881.1"/>
    </source>
</evidence>
<keyword id="KW-0027">Amidation</keyword>
<keyword id="KW-0175">Coiled coil</keyword>
<keyword id="KW-0903">Direct protein sequencing</keyword>
<keyword id="KW-0372">Hormone</keyword>
<keyword id="KW-0873">Pyrrolidone carboxylic acid</keyword>
<keyword id="KW-1185">Reference proteome</keyword>
<keyword id="KW-0964">Secreted</keyword>
<keyword id="KW-0732">Signal</keyword>
<organism>
    <name type="scientific">Camponotus floridanus</name>
    <name type="common">Florida carpenter ant</name>
    <dbReference type="NCBI Taxonomy" id="104421"/>
    <lineage>
        <taxon>Eukaryota</taxon>
        <taxon>Metazoa</taxon>
        <taxon>Ecdysozoa</taxon>
        <taxon>Arthropoda</taxon>
        <taxon>Hexapoda</taxon>
        <taxon>Insecta</taxon>
        <taxon>Pterygota</taxon>
        <taxon>Neoptera</taxon>
        <taxon>Endopterygota</taxon>
        <taxon>Hymenoptera</taxon>
        <taxon>Apocrita</taxon>
        <taxon>Aculeata</taxon>
        <taxon>Formicoidea</taxon>
        <taxon>Formicidae</taxon>
        <taxon>Formicinae</taxon>
        <taxon>Camponotus</taxon>
    </lineage>
</organism>
<dbReference type="EMBL" id="GL437183">
    <property type="protein sequence ID" value="EFN70881.1"/>
    <property type="molecule type" value="Genomic_DNA"/>
</dbReference>
<dbReference type="STRING" id="104421.E2A6P1"/>
<dbReference type="EnsemblMetazoa" id="XM_011254132.3">
    <property type="protein sequence ID" value="XP_011252434.1"/>
    <property type="gene ID" value="LOC105249007"/>
</dbReference>
<dbReference type="OMA" id="RERQDDQ"/>
<dbReference type="OrthoDB" id="6418774at2759"/>
<dbReference type="Proteomes" id="UP000000311">
    <property type="component" value="Unassembled WGS sequence"/>
</dbReference>
<dbReference type="GO" id="GO:0005576">
    <property type="term" value="C:extracellular region"/>
    <property type="evidence" value="ECO:0007669"/>
    <property type="project" value="UniProtKB-SubCell"/>
</dbReference>
<dbReference type="GO" id="GO:0005179">
    <property type="term" value="F:hormone activity"/>
    <property type="evidence" value="ECO:0007669"/>
    <property type="project" value="UniProtKB-KW"/>
</dbReference>
<dbReference type="InterPro" id="IPR000187">
    <property type="entry name" value="CRF"/>
</dbReference>
<dbReference type="Pfam" id="PF00473">
    <property type="entry name" value="CRF"/>
    <property type="match status" value="1"/>
</dbReference>
<dbReference type="SMART" id="SM00039">
    <property type="entry name" value="CRF"/>
    <property type="match status" value="1"/>
</dbReference>
<sequence>MILLGILASTTIIGLTSSAPLSSYERRDVSDNRPKIFLLMDERIPELENEILGNELGSDVTRTKRIGSLSIVNNLDVLRNRVMLELARRKQERDQRQIEENRRFLENIGKRSVPVSDAGKIVRSDKSRNDRNQPLQFNRIEWIEEEDPLFRGSQDDQMTRVQANELRLL</sequence>
<proteinExistence type="evidence at protein level"/>
<name>DIH44_CAMFO</name>
<accession>E2A6P1</accession>